<feature type="chain" id="PRO_0000166997" description="Probable glycine dehydrogenase (decarboxylating) subunit 2">
    <location>
        <begin position="1"/>
        <end position="491"/>
    </location>
</feature>
<feature type="modified residue" description="N6-(pyridoxal phosphate)lysine" evidence="1">
    <location>
        <position position="273"/>
    </location>
</feature>
<dbReference type="EC" id="1.4.4.2" evidence="1"/>
<dbReference type="EMBL" id="CP000001">
    <property type="protein sequence ID" value="AAU16290.1"/>
    <property type="molecule type" value="Genomic_DNA"/>
</dbReference>
<dbReference type="RefSeq" id="WP_000795698.1">
    <property type="nucleotide sequence ID" value="NZ_CP009968.1"/>
</dbReference>
<dbReference type="SMR" id="Q634V8"/>
<dbReference type="GeneID" id="93006875"/>
<dbReference type="KEGG" id="bcz:BCE33L3979"/>
<dbReference type="PATRIC" id="fig|288681.22.peg.1417"/>
<dbReference type="Proteomes" id="UP000002612">
    <property type="component" value="Chromosome"/>
</dbReference>
<dbReference type="GO" id="GO:0005829">
    <property type="term" value="C:cytosol"/>
    <property type="evidence" value="ECO:0007669"/>
    <property type="project" value="TreeGrafter"/>
</dbReference>
<dbReference type="GO" id="GO:0005960">
    <property type="term" value="C:glycine cleavage complex"/>
    <property type="evidence" value="ECO:0007669"/>
    <property type="project" value="TreeGrafter"/>
</dbReference>
<dbReference type="GO" id="GO:0016594">
    <property type="term" value="F:glycine binding"/>
    <property type="evidence" value="ECO:0007669"/>
    <property type="project" value="TreeGrafter"/>
</dbReference>
<dbReference type="GO" id="GO:0004375">
    <property type="term" value="F:glycine dehydrogenase (decarboxylating) activity"/>
    <property type="evidence" value="ECO:0007669"/>
    <property type="project" value="UniProtKB-EC"/>
</dbReference>
<dbReference type="GO" id="GO:0030170">
    <property type="term" value="F:pyridoxal phosphate binding"/>
    <property type="evidence" value="ECO:0007669"/>
    <property type="project" value="TreeGrafter"/>
</dbReference>
<dbReference type="GO" id="GO:0019464">
    <property type="term" value="P:glycine decarboxylation via glycine cleavage system"/>
    <property type="evidence" value="ECO:0007669"/>
    <property type="project" value="UniProtKB-UniRule"/>
</dbReference>
<dbReference type="CDD" id="cd00613">
    <property type="entry name" value="GDC-P"/>
    <property type="match status" value="1"/>
</dbReference>
<dbReference type="FunFam" id="3.40.640.10:FF:000034">
    <property type="entry name" value="Probable glycine dehydrogenase (decarboxylating) subunit 2"/>
    <property type="match status" value="1"/>
</dbReference>
<dbReference type="FunFam" id="3.90.1150.10:FF:000014">
    <property type="entry name" value="Probable glycine dehydrogenase (decarboxylating) subunit 2"/>
    <property type="match status" value="1"/>
</dbReference>
<dbReference type="Gene3D" id="6.20.440.10">
    <property type="match status" value="1"/>
</dbReference>
<dbReference type="Gene3D" id="3.90.1150.10">
    <property type="entry name" value="Aspartate Aminotransferase, domain 1"/>
    <property type="match status" value="1"/>
</dbReference>
<dbReference type="Gene3D" id="3.40.640.10">
    <property type="entry name" value="Type I PLP-dependent aspartate aminotransferase-like (Major domain)"/>
    <property type="match status" value="1"/>
</dbReference>
<dbReference type="HAMAP" id="MF_00713">
    <property type="entry name" value="GcvPB"/>
    <property type="match status" value="1"/>
</dbReference>
<dbReference type="InterPro" id="IPR023012">
    <property type="entry name" value="GcvPB"/>
</dbReference>
<dbReference type="InterPro" id="IPR049316">
    <property type="entry name" value="GDC-P_C"/>
</dbReference>
<dbReference type="InterPro" id="IPR049315">
    <property type="entry name" value="GDC-P_N"/>
</dbReference>
<dbReference type="InterPro" id="IPR020581">
    <property type="entry name" value="GDC_P"/>
</dbReference>
<dbReference type="InterPro" id="IPR015424">
    <property type="entry name" value="PyrdxlP-dep_Trfase"/>
</dbReference>
<dbReference type="InterPro" id="IPR015421">
    <property type="entry name" value="PyrdxlP-dep_Trfase_major"/>
</dbReference>
<dbReference type="InterPro" id="IPR015422">
    <property type="entry name" value="PyrdxlP-dep_Trfase_small"/>
</dbReference>
<dbReference type="NCBIfam" id="NF003346">
    <property type="entry name" value="PRK04366.1"/>
    <property type="match status" value="1"/>
</dbReference>
<dbReference type="PANTHER" id="PTHR11773:SF1">
    <property type="entry name" value="GLYCINE DEHYDROGENASE (DECARBOXYLATING), MITOCHONDRIAL"/>
    <property type="match status" value="1"/>
</dbReference>
<dbReference type="PANTHER" id="PTHR11773">
    <property type="entry name" value="GLYCINE DEHYDROGENASE, DECARBOXYLATING"/>
    <property type="match status" value="1"/>
</dbReference>
<dbReference type="Pfam" id="PF21478">
    <property type="entry name" value="GcvP2_C"/>
    <property type="match status" value="1"/>
</dbReference>
<dbReference type="Pfam" id="PF02347">
    <property type="entry name" value="GDC-P"/>
    <property type="match status" value="1"/>
</dbReference>
<dbReference type="SUPFAM" id="SSF53383">
    <property type="entry name" value="PLP-dependent transferases"/>
    <property type="match status" value="1"/>
</dbReference>
<proteinExistence type="inferred from homology"/>
<organism>
    <name type="scientific">Bacillus cereus (strain ZK / E33L)</name>
    <dbReference type="NCBI Taxonomy" id="288681"/>
    <lineage>
        <taxon>Bacteria</taxon>
        <taxon>Bacillati</taxon>
        <taxon>Bacillota</taxon>
        <taxon>Bacilli</taxon>
        <taxon>Bacillales</taxon>
        <taxon>Bacillaceae</taxon>
        <taxon>Bacillus</taxon>
        <taxon>Bacillus cereus group</taxon>
    </lineage>
</organism>
<sequence length="491" mass="54865">MKNQDQALIFEVSKEGRIGYSLPKLDVEEVKLEDVFESDYIRVEDAELPEVSELDIMRHYTALSNRNHGVDSGFYPLGSCTMKYNPKINESVARFAGFANIHPLQDEKTVQGAMELMYDLQEHLIEITGMDTVTLQPAAGAHGEWTGLMLIRAYHEANGDFNRTKVIVPDSAHGTNPASATVAGFETITVKSNEHGLVDLEDLKRVVNEETAALMLTNPNTLGLFEENILEMAEIVHNAGGKLYYDGANLNAVLSQARPGDMGFDVVHLNLHKTFTGPHGGGGPGSGPVGVKADLIPYLPKPILEKTENGYHFNYDRPEAIGRVKPFYGNFGINVRAYTYIRSMGPDGLRAVTEYAVLNANYMMRRLAPFYDLPFDRHCKHEFVLSGRRQKKLGVRTLDIAKRLLDFGYHPPTIYFPLNVEECIMIEPTETESKETLDGFIDKMIQIAKEVEENPEVVQEAPHTTVIKRLDETMAARKPVLRYAKPAPVQV</sequence>
<keyword id="KW-0560">Oxidoreductase</keyword>
<keyword id="KW-0663">Pyridoxal phosphate</keyword>
<name>GCSPB_BACCZ</name>
<comment type="function">
    <text evidence="1">The glycine cleavage system catalyzes the degradation of glycine. The P protein binds the alpha-amino group of glycine through its pyridoxal phosphate cofactor; CO(2) is released and the remaining methylamine moiety is then transferred to the lipoamide cofactor of the H protein.</text>
</comment>
<comment type="catalytic activity">
    <reaction evidence="1">
        <text>N(6)-[(R)-lipoyl]-L-lysyl-[glycine-cleavage complex H protein] + glycine + H(+) = N(6)-[(R)-S(8)-aminomethyldihydrolipoyl]-L-lysyl-[glycine-cleavage complex H protein] + CO2</text>
        <dbReference type="Rhea" id="RHEA:24304"/>
        <dbReference type="Rhea" id="RHEA-COMP:10494"/>
        <dbReference type="Rhea" id="RHEA-COMP:10495"/>
        <dbReference type="ChEBI" id="CHEBI:15378"/>
        <dbReference type="ChEBI" id="CHEBI:16526"/>
        <dbReference type="ChEBI" id="CHEBI:57305"/>
        <dbReference type="ChEBI" id="CHEBI:83099"/>
        <dbReference type="ChEBI" id="CHEBI:83143"/>
        <dbReference type="EC" id="1.4.4.2"/>
    </reaction>
</comment>
<comment type="cofactor">
    <cofactor evidence="1">
        <name>pyridoxal 5'-phosphate</name>
        <dbReference type="ChEBI" id="CHEBI:597326"/>
    </cofactor>
</comment>
<comment type="subunit">
    <text evidence="1">The glycine cleavage system is composed of four proteins: P, T, L and H. In this organism, the P 'protein' is a heterodimer of two subunits.</text>
</comment>
<comment type="similarity">
    <text evidence="1">Belongs to the GcvP family. C-terminal subunit subfamily.</text>
</comment>
<gene>
    <name evidence="1" type="primary">gcvPB</name>
    <name type="ordered locus">BCE33L3979</name>
</gene>
<protein>
    <recommendedName>
        <fullName evidence="1">Probable glycine dehydrogenase (decarboxylating) subunit 2</fullName>
        <ecNumber evidence="1">1.4.4.2</ecNumber>
    </recommendedName>
    <alternativeName>
        <fullName evidence="1">Glycine cleavage system P-protein subunit 2</fullName>
    </alternativeName>
    <alternativeName>
        <fullName evidence="1">Glycine decarboxylase subunit 2</fullName>
    </alternativeName>
    <alternativeName>
        <fullName evidence="1">Glycine dehydrogenase (aminomethyl-transferring) subunit 2</fullName>
    </alternativeName>
</protein>
<accession>Q634V8</accession>
<reference key="1">
    <citation type="journal article" date="2006" name="J. Bacteriol.">
        <title>Pathogenomic sequence analysis of Bacillus cereus and Bacillus thuringiensis isolates closely related to Bacillus anthracis.</title>
        <authorList>
            <person name="Han C.S."/>
            <person name="Xie G."/>
            <person name="Challacombe J.F."/>
            <person name="Altherr M.R."/>
            <person name="Bhotika S.S."/>
            <person name="Bruce D."/>
            <person name="Campbell C.S."/>
            <person name="Campbell M.L."/>
            <person name="Chen J."/>
            <person name="Chertkov O."/>
            <person name="Cleland C."/>
            <person name="Dimitrijevic M."/>
            <person name="Doggett N.A."/>
            <person name="Fawcett J.J."/>
            <person name="Glavina T."/>
            <person name="Goodwin L.A."/>
            <person name="Hill K.K."/>
            <person name="Hitchcock P."/>
            <person name="Jackson P.J."/>
            <person name="Keim P."/>
            <person name="Kewalramani A.R."/>
            <person name="Longmire J."/>
            <person name="Lucas S."/>
            <person name="Malfatti S."/>
            <person name="McMurry K."/>
            <person name="Meincke L.J."/>
            <person name="Misra M."/>
            <person name="Moseman B.L."/>
            <person name="Mundt M."/>
            <person name="Munk A.C."/>
            <person name="Okinaka R.T."/>
            <person name="Parson-Quintana B."/>
            <person name="Reilly L.P."/>
            <person name="Richardson P."/>
            <person name="Robinson D.L."/>
            <person name="Rubin E."/>
            <person name="Saunders E."/>
            <person name="Tapia R."/>
            <person name="Tesmer J.G."/>
            <person name="Thayer N."/>
            <person name="Thompson L.S."/>
            <person name="Tice H."/>
            <person name="Ticknor L.O."/>
            <person name="Wills P.L."/>
            <person name="Brettin T.S."/>
            <person name="Gilna P."/>
        </authorList>
    </citation>
    <scope>NUCLEOTIDE SEQUENCE [LARGE SCALE GENOMIC DNA]</scope>
    <source>
        <strain>ZK / E33L</strain>
    </source>
</reference>
<evidence type="ECO:0000255" key="1">
    <source>
        <dbReference type="HAMAP-Rule" id="MF_00713"/>
    </source>
</evidence>